<dbReference type="EC" id="2.7.7.72" evidence="1"/>
<dbReference type="EC" id="3.1.3.-" evidence="1"/>
<dbReference type="EC" id="3.1.4.-" evidence="1"/>
<dbReference type="EMBL" id="AM260479">
    <property type="protein sequence ID" value="CAJ91405.1"/>
    <property type="molecule type" value="Genomic_DNA"/>
</dbReference>
<dbReference type="RefSeq" id="WP_011614431.1">
    <property type="nucleotide sequence ID" value="NC_008313.1"/>
</dbReference>
<dbReference type="SMR" id="Q0KF16"/>
<dbReference type="STRING" id="381666.H16_A0253"/>
<dbReference type="KEGG" id="reh:H16_A0253"/>
<dbReference type="PATRIC" id="fig|381666.6.peg.613"/>
<dbReference type="eggNOG" id="COG0617">
    <property type="taxonomic scope" value="Bacteria"/>
</dbReference>
<dbReference type="HOGENOM" id="CLU_015961_1_1_4"/>
<dbReference type="OrthoDB" id="9805698at2"/>
<dbReference type="Proteomes" id="UP000008210">
    <property type="component" value="Chromosome 1"/>
</dbReference>
<dbReference type="GO" id="GO:0005524">
    <property type="term" value="F:ATP binding"/>
    <property type="evidence" value="ECO:0007669"/>
    <property type="project" value="UniProtKB-UniRule"/>
</dbReference>
<dbReference type="GO" id="GO:0004810">
    <property type="term" value="F:CCA tRNA nucleotidyltransferase activity"/>
    <property type="evidence" value="ECO:0007669"/>
    <property type="project" value="UniProtKB-UniRule"/>
</dbReference>
<dbReference type="GO" id="GO:0004112">
    <property type="term" value="F:cyclic-nucleotide phosphodiesterase activity"/>
    <property type="evidence" value="ECO:0007669"/>
    <property type="project" value="UniProtKB-UniRule"/>
</dbReference>
<dbReference type="GO" id="GO:0000287">
    <property type="term" value="F:magnesium ion binding"/>
    <property type="evidence" value="ECO:0007669"/>
    <property type="project" value="UniProtKB-UniRule"/>
</dbReference>
<dbReference type="GO" id="GO:0016791">
    <property type="term" value="F:phosphatase activity"/>
    <property type="evidence" value="ECO:0007669"/>
    <property type="project" value="UniProtKB-UniRule"/>
</dbReference>
<dbReference type="GO" id="GO:0000049">
    <property type="term" value="F:tRNA binding"/>
    <property type="evidence" value="ECO:0007669"/>
    <property type="project" value="UniProtKB-UniRule"/>
</dbReference>
<dbReference type="GO" id="GO:0042245">
    <property type="term" value="P:RNA repair"/>
    <property type="evidence" value="ECO:0007669"/>
    <property type="project" value="UniProtKB-KW"/>
</dbReference>
<dbReference type="GO" id="GO:0001680">
    <property type="term" value="P:tRNA 3'-terminal CCA addition"/>
    <property type="evidence" value="ECO:0007669"/>
    <property type="project" value="UniProtKB-UniRule"/>
</dbReference>
<dbReference type="CDD" id="cd00077">
    <property type="entry name" value="HDc"/>
    <property type="match status" value="1"/>
</dbReference>
<dbReference type="CDD" id="cd05398">
    <property type="entry name" value="NT_ClassII-CCAase"/>
    <property type="match status" value="1"/>
</dbReference>
<dbReference type="Gene3D" id="3.30.460.10">
    <property type="entry name" value="Beta Polymerase, domain 2"/>
    <property type="match status" value="1"/>
</dbReference>
<dbReference type="Gene3D" id="1.10.3090.10">
    <property type="entry name" value="cca-adding enzyme, domain 2"/>
    <property type="match status" value="1"/>
</dbReference>
<dbReference type="HAMAP" id="MF_01261">
    <property type="entry name" value="CCA_bact_type1"/>
    <property type="match status" value="1"/>
</dbReference>
<dbReference type="InterPro" id="IPR012006">
    <property type="entry name" value="CCA_bact"/>
</dbReference>
<dbReference type="InterPro" id="IPR003607">
    <property type="entry name" value="HD/PDEase_dom"/>
</dbReference>
<dbReference type="InterPro" id="IPR006674">
    <property type="entry name" value="HD_domain"/>
</dbReference>
<dbReference type="InterPro" id="IPR043519">
    <property type="entry name" value="NT_sf"/>
</dbReference>
<dbReference type="InterPro" id="IPR002646">
    <property type="entry name" value="PolA_pol_head_dom"/>
</dbReference>
<dbReference type="InterPro" id="IPR032828">
    <property type="entry name" value="PolyA_RNA-bd"/>
</dbReference>
<dbReference type="InterPro" id="IPR050124">
    <property type="entry name" value="tRNA_CCA-adding_enzyme"/>
</dbReference>
<dbReference type="NCBIfam" id="NF008137">
    <property type="entry name" value="PRK10885.1"/>
    <property type="match status" value="1"/>
</dbReference>
<dbReference type="PANTHER" id="PTHR47545">
    <property type="entry name" value="MULTIFUNCTIONAL CCA PROTEIN"/>
    <property type="match status" value="1"/>
</dbReference>
<dbReference type="PANTHER" id="PTHR47545:SF1">
    <property type="entry name" value="MULTIFUNCTIONAL CCA PROTEIN"/>
    <property type="match status" value="1"/>
</dbReference>
<dbReference type="Pfam" id="PF01966">
    <property type="entry name" value="HD"/>
    <property type="match status" value="1"/>
</dbReference>
<dbReference type="Pfam" id="PF01743">
    <property type="entry name" value="PolyA_pol"/>
    <property type="match status" value="1"/>
</dbReference>
<dbReference type="Pfam" id="PF12627">
    <property type="entry name" value="PolyA_pol_RNAbd"/>
    <property type="match status" value="1"/>
</dbReference>
<dbReference type="PIRSF" id="PIRSF000813">
    <property type="entry name" value="CCA_bact"/>
    <property type="match status" value="1"/>
</dbReference>
<dbReference type="SMART" id="SM00471">
    <property type="entry name" value="HDc"/>
    <property type="match status" value="1"/>
</dbReference>
<dbReference type="SUPFAM" id="SSF81301">
    <property type="entry name" value="Nucleotidyltransferase"/>
    <property type="match status" value="1"/>
</dbReference>
<dbReference type="SUPFAM" id="SSF81891">
    <property type="entry name" value="Poly A polymerase C-terminal region-like"/>
    <property type="match status" value="1"/>
</dbReference>
<dbReference type="PROSITE" id="PS51831">
    <property type="entry name" value="HD"/>
    <property type="match status" value="1"/>
</dbReference>
<keyword id="KW-0067">ATP-binding</keyword>
<keyword id="KW-0378">Hydrolase</keyword>
<keyword id="KW-0460">Magnesium</keyword>
<keyword id="KW-0479">Metal-binding</keyword>
<keyword id="KW-0511">Multifunctional enzyme</keyword>
<keyword id="KW-0533">Nickel</keyword>
<keyword id="KW-0547">Nucleotide-binding</keyword>
<keyword id="KW-0548">Nucleotidyltransferase</keyword>
<keyword id="KW-1185">Reference proteome</keyword>
<keyword id="KW-0692">RNA repair</keyword>
<keyword id="KW-0694">RNA-binding</keyword>
<keyword id="KW-0808">Transferase</keyword>
<keyword id="KW-0819">tRNA processing</keyword>
<proteinExistence type="inferred from homology"/>
<feature type="chain" id="PRO_1000054288" description="Multifunctional CCA protein">
    <location>
        <begin position="1"/>
        <end position="411"/>
    </location>
</feature>
<feature type="domain" description="HD" evidence="1">
    <location>
        <begin position="232"/>
        <end position="333"/>
    </location>
</feature>
<feature type="binding site" evidence="1">
    <location>
        <position position="8"/>
    </location>
    <ligand>
        <name>ATP</name>
        <dbReference type="ChEBI" id="CHEBI:30616"/>
    </ligand>
</feature>
<feature type="binding site" evidence="1">
    <location>
        <position position="8"/>
    </location>
    <ligand>
        <name>CTP</name>
        <dbReference type="ChEBI" id="CHEBI:37563"/>
    </ligand>
</feature>
<feature type="binding site" evidence="1">
    <location>
        <position position="11"/>
    </location>
    <ligand>
        <name>ATP</name>
        <dbReference type="ChEBI" id="CHEBI:30616"/>
    </ligand>
</feature>
<feature type="binding site" evidence="1">
    <location>
        <position position="11"/>
    </location>
    <ligand>
        <name>CTP</name>
        <dbReference type="ChEBI" id="CHEBI:37563"/>
    </ligand>
</feature>
<feature type="binding site" evidence="1">
    <location>
        <position position="21"/>
    </location>
    <ligand>
        <name>Mg(2+)</name>
        <dbReference type="ChEBI" id="CHEBI:18420"/>
    </ligand>
</feature>
<feature type="binding site" evidence="1">
    <location>
        <position position="23"/>
    </location>
    <ligand>
        <name>Mg(2+)</name>
        <dbReference type="ChEBI" id="CHEBI:18420"/>
    </ligand>
</feature>
<feature type="binding site" evidence="1">
    <location>
        <position position="91"/>
    </location>
    <ligand>
        <name>ATP</name>
        <dbReference type="ChEBI" id="CHEBI:30616"/>
    </ligand>
</feature>
<feature type="binding site" evidence="1">
    <location>
        <position position="91"/>
    </location>
    <ligand>
        <name>CTP</name>
        <dbReference type="ChEBI" id="CHEBI:37563"/>
    </ligand>
</feature>
<feature type="binding site" evidence="1">
    <location>
        <position position="143"/>
    </location>
    <ligand>
        <name>ATP</name>
        <dbReference type="ChEBI" id="CHEBI:30616"/>
    </ligand>
</feature>
<feature type="binding site" evidence="1">
    <location>
        <position position="143"/>
    </location>
    <ligand>
        <name>CTP</name>
        <dbReference type="ChEBI" id="CHEBI:37563"/>
    </ligand>
</feature>
<feature type="binding site" evidence="1">
    <location>
        <position position="146"/>
    </location>
    <ligand>
        <name>ATP</name>
        <dbReference type="ChEBI" id="CHEBI:30616"/>
    </ligand>
</feature>
<feature type="binding site" evidence="1">
    <location>
        <position position="146"/>
    </location>
    <ligand>
        <name>CTP</name>
        <dbReference type="ChEBI" id="CHEBI:37563"/>
    </ligand>
</feature>
<organism>
    <name type="scientific">Cupriavidus necator (strain ATCC 17699 / DSM 428 / KCTC 22496 / NCIMB 10442 / H16 / Stanier 337)</name>
    <name type="common">Ralstonia eutropha</name>
    <dbReference type="NCBI Taxonomy" id="381666"/>
    <lineage>
        <taxon>Bacteria</taxon>
        <taxon>Pseudomonadati</taxon>
        <taxon>Pseudomonadota</taxon>
        <taxon>Betaproteobacteria</taxon>
        <taxon>Burkholderiales</taxon>
        <taxon>Burkholderiaceae</taxon>
        <taxon>Cupriavidus</taxon>
    </lineage>
</organism>
<reference key="1">
    <citation type="journal article" date="2006" name="Nat. Biotechnol.">
        <title>Genome sequence of the bioplastic-producing 'Knallgas' bacterium Ralstonia eutropha H16.</title>
        <authorList>
            <person name="Pohlmann A."/>
            <person name="Fricke W.F."/>
            <person name="Reinecke F."/>
            <person name="Kusian B."/>
            <person name="Liesegang H."/>
            <person name="Cramm R."/>
            <person name="Eitinger T."/>
            <person name="Ewering C."/>
            <person name="Poetter M."/>
            <person name="Schwartz E."/>
            <person name="Strittmatter A."/>
            <person name="Voss I."/>
            <person name="Gottschalk G."/>
            <person name="Steinbuechel A."/>
            <person name="Friedrich B."/>
            <person name="Bowien B."/>
        </authorList>
    </citation>
    <scope>NUCLEOTIDE SEQUENCE [LARGE SCALE GENOMIC DNA]</scope>
    <source>
        <strain>ATCC 17699 / DSM 428 / KCTC 22496 / NCIMB 10442 / H16 / Stanier 337</strain>
    </source>
</reference>
<sequence length="411" mass="44932">MQVYAVGGAIRDELLGKPSQDRDYVVVGATPAQMEAAGYKPVGKDFPVFLHPRTKEEYALARTERKTAMGYKGFAFYCEPDVTLEDDLVRRDLTINAMARAVDADGNLTGPVIDPHGGQRDLAARLFRHVSDAFAEDPVRILRVARFAARFHEFGVAAETMRLMREMVAAGEVDALVPERVWQELARGLMEAKPSRMFEVLRECGALARLLPELERLWGVPQRADYHPEIDTGVHVMMVIDQAAAMGAPLTVRFAALVHDLGKGTTPADVLPRHIGHESRSAQLLEDVCVRLRVPNECRDLALVVAREHGNIHRSQEFSAAAVMRLLERCDALRKPARFAEALQACEADLRGRKGFESSAYPQAARLLAALEAAAAVDAGAIARACGDDVGQIRDRVQAARVAAVAARIGG</sequence>
<accession>Q0KF16</accession>
<protein>
    <recommendedName>
        <fullName evidence="1">Multifunctional CCA protein</fullName>
    </recommendedName>
    <domain>
        <recommendedName>
            <fullName evidence="1">CCA-adding enzyme</fullName>
            <ecNumber evidence="1">2.7.7.72</ecNumber>
        </recommendedName>
        <alternativeName>
            <fullName evidence="1">CCA tRNA nucleotidyltransferase</fullName>
        </alternativeName>
        <alternativeName>
            <fullName evidence="1">tRNA CCA-pyrophosphorylase</fullName>
        </alternativeName>
        <alternativeName>
            <fullName evidence="1">tRNA adenylyl-/cytidylyl-transferase</fullName>
        </alternativeName>
        <alternativeName>
            <fullName evidence="1">tRNA nucleotidyltransferase</fullName>
        </alternativeName>
        <alternativeName>
            <fullName evidence="1">tRNA-NT</fullName>
        </alternativeName>
    </domain>
    <domain>
        <recommendedName>
            <fullName evidence="1">2'-nucleotidase</fullName>
            <ecNumber evidence="1">3.1.3.-</ecNumber>
        </recommendedName>
    </domain>
    <domain>
        <recommendedName>
            <fullName evidence="1">2',3'-cyclic phosphodiesterase</fullName>
            <ecNumber evidence="1">3.1.4.-</ecNumber>
        </recommendedName>
    </domain>
    <domain>
        <recommendedName>
            <fullName evidence="1">Phosphatase</fullName>
            <ecNumber evidence="1">3.1.3.-</ecNumber>
        </recommendedName>
    </domain>
</protein>
<gene>
    <name evidence="1" type="primary">cca</name>
    <name type="ordered locus">H16_A0253</name>
</gene>
<comment type="function">
    <text evidence="1">Catalyzes the addition and repair of the essential 3'-terminal CCA sequence in tRNAs without using a nucleic acid template. Adds these three nucleotides in the order of C, C, and A to the tRNA nucleotide-73, using CTP and ATP as substrates and producing inorganic pyrophosphate. tRNA 3'-terminal CCA addition is required both for tRNA processing and repair. Also involved in tRNA surveillance by mediating tandem CCA addition to generate a CCACCA at the 3' terminus of unstable tRNAs. While stable tRNAs receive only 3'-terminal CCA, unstable tRNAs are marked with CCACCA and rapidly degraded.</text>
</comment>
<comment type="catalytic activity">
    <reaction evidence="1">
        <text>a tRNA precursor + 2 CTP + ATP = a tRNA with a 3' CCA end + 3 diphosphate</text>
        <dbReference type="Rhea" id="RHEA:14433"/>
        <dbReference type="Rhea" id="RHEA-COMP:10465"/>
        <dbReference type="Rhea" id="RHEA-COMP:10468"/>
        <dbReference type="ChEBI" id="CHEBI:30616"/>
        <dbReference type="ChEBI" id="CHEBI:33019"/>
        <dbReference type="ChEBI" id="CHEBI:37563"/>
        <dbReference type="ChEBI" id="CHEBI:74896"/>
        <dbReference type="ChEBI" id="CHEBI:83071"/>
        <dbReference type="EC" id="2.7.7.72"/>
    </reaction>
</comment>
<comment type="catalytic activity">
    <reaction evidence="1">
        <text>a tRNA with a 3' CCA end + 2 CTP + ATP = a tRNA with a 3' CCACCA end + 3 diphosphate</text>
        <dbReference type="Rhea" id="RHEA:76235"/>
        <dbReference type="Rhea" id="RHEA-COMP:10468"/>
        <dbReference type="Rhea" id="RHEA-COMP:18655"/>
        <dbReference type="ChEBI" id="CHEBI:30616"/>
        <dbReference type="ChEBI" id="CHEBI:33019"/>
        <dbReference type="ChEBI" id="CHEBI:37563"/>
        <dbReference type="ChEBI" id="CHEBI:83071"/>
        <dbReference type="ChEBI" id="CHEBI:195187"/>
    </reaction>
    <physiologicalReaction direction="left-to-right" evidence="1">
        <dbReference type="Rhea" id="RHEA:76236"/>
    </physiologicalReaction>
</comment>
<comment type="cofactor">
    <cofactor evidence="1">
        <name>Mg(2+)</name>
        <dbReference type="ChEBI" id="CHEBI:18420"/>
    </cofactor>
    <text evidence="1">Magnesium is required for nucleotidyltransferase activity.</text>
</comment>
<comment type="cofactor">
    <cofactor evidence="1">
        <name>Ni(2+)</name>
        <dbReference type="ChEBI" id="CHEBI:49786"/>
    </cofactor>
    <text evidence="1">Nickel for phosphatase activity.</text>
</comment>
<comment type="subunit">
    <text evidence="1">Monomer. Can also form homodimers and oligomers.</text>
</comment>
<comment type="domain">
    <text evidence="1">Comprises two domains: an N-terminal domain containing the nucleotidyltransferase activity and a C-terminal HD domain associated with both phosphodiesterase and phosphatase activities.</text>
</comment>
<comment type="miscellaneous">
    <text evidence="1">A single active site specifically recognizes both ATP and CTP and is responsible for their addition.</text>
</comment>
<comment type="similarity">
    <text evidence="1">Belongs to the tRNA nucleotidyltransferase/poly(A) polymerase family. Bacterial CCA-adding enzyme type 1 subfamily.</text>
</comment>
<name>CCA_CUPNH</name>
<evidence type="ECO:0000255" key="1">
    <source>
        <dbReference type="HAMAP-Rule" id="MF_01261"/>
    </source>
</evidence>